<accession>Q3L245</accession>
<gene>
    <name evidence="7" type="primary">pdh1</name>
</gene>
<feature type="signal peptide" evidence="2">
    <location>
        <begin position="1"/>
        <end position="25"/>
    </location>
</feature>
<feature type="chain" id="PRO_0000431287" description="Pyranose dehydrogenase 1">
    <location>
        <begin position="26"/>
        <end position="602"/>
    </location>
</feature>
<feature type="active site" description="Proton acceptor" evidence="4">
    <location>
        <position position="537"/>
    </location>
</feature>
<feature type="active site" evidence="4">
    <location>
        <position position="581"/>
    </location>
</feature>
<feature type="modified residue" description="Tele-8alpha-FAD histidine" evidence="4">
    <location>
        <position position="128"/>
    </location>
</feature>
<feature type="glycosylation site" description="N-linked (GlcNAc...) asparagine" evidence="4">
    <location>
        <position position="100"/>
    </location>
</feature>
<feature type="glycosylation site" description="N-linked (GlcNAc...) asparagine" evidence="1">
    <location>
        <position position="200"/>
    </location>
</feature>
<feature type="glycosylation site" description="N-linked (GlcNAc...) asparagine" evidence="1">
    <location>
        <position position="277"/>
    </location>
</feature>
<feature type="glycosylation site" description="N-linked (GlcNAc...) asparagine" evidence="4">
    <location>
        <position position="344"/>
    </location>
</feature>
<feature type="strand" evidence="10">
    <location>
        <begin position="27"/>
        <end position="31"/>
    </location>
</feature>
<feature type="helix" evidence="10">
    <location>
        <begin position="32"/>
        <end position="34"/>
    </location>
</feature>
<feature type="strand" evidence="10">
    <location>
        <begin position="42"/>
        <end position="46"/>
    </location>
</feature>
<feature type="helix" evidence="10">
    <location>
        <begin position="50"/>
        <end position="59"/>
    </location>
</feature>
<feature type="strand" evidence="10">
    <location>
        <begin position="67"/>
        <end position="70"/>
    </location>
</feature>
<feature type="helix" evidence="10">
    <location>
        <begin position="80"/>
        <end position="83"/>
    </location>
</feature>
<feature type="helix" evidence="10">
    <location>
        <begin position="85"/>
        <end position="90"/>
    </location>
</feature>
<feature type="turn" evidence="10">
    <location>
        <begin position="107"/>
        <end position="111"/>
    </location>
</feature>
<feature type="helix" evidence="10">
    <location>
        <begin position="124"/>
        <end position="127"/>
    </location>
</feature>
<feature type="helix" evidence="10">
    <location>
        <begin position="138"/>
        <end position="148"/>
    </location>
</feature>
<feature type="helix" evidence="10">
    <location>
        <begin position="151"/>
        <end position="153"/>
    </location>
</feature>
<feature type="helix" evidence="10">
    <location>
        <begin position="155"/>
        <end position="165"/>
    </location>
</feature>
<feature type="strand" evidence="10">
    <location>
        <begin position="166"/>
        <end position="168"/>
    </location>
</feature>
<feature type="helix" evidence="10">
    <location>
        <begin position="183"/>
        <end position="185"/>
    </location>
</feature>
<feature type="strand" evidence="10">
    <location>
        <begin position="188"/>
        <end position="195"/>
    </location>
</feature>
<feature type="helix" evidence="10">
    <location>
        <begin position="202"/>
        <end position="213"/>
    </location>
</feature>
<feature type="turn" evidence="10">
    <location>
        <begin position="215"/>
        <end position="217"/>
    </location>
</feature>
<feature type="strand" evidence="10">
    <location>
        <begin position="231"/>
        <end position="234"/>
    </location>
</feature>
<feature type="strand" evidence="10">
    <location>
        <begin position="237"/>
        <end position="239"/>
    </location>
</feature>
<feature type="helix" evidence="10">
    <location>
        <begin position="248"/>
        <end position="251"/>
    </location>
</feature>
<feature type="turn" evidence="10">
    <location>
        <begin position="252"/>
        <end position="255"/>
    </location>
</feature>
<feature type="strand" evidence="10">
    <location>
        <begin position="260"/>
        <end position="263"/>
    </location>
</feature>
<feature type="strand" evidence="10">
    <location>
        <begin position="267"/>
        <end position="272"/>
    </location>
</feature>
<feature type="strand" evidence="10">
    <location>
        <begin position="274"/>
        <end position="280"/>
    </location>
</feature>
<feature type="strand" evidence="10">
    <location>
        <begin position="283"/>
        <end position="289"/>
    </location>
</feature>
<feature type="strand" evidence="10">
    <location>
        <begin position="295"/>
        <end position="298"/>
    </location>
</feature>
<feature type="strand" evidence="10">
    <location>
        <begin position="300"/>
        <end position="305"/>
    </location>
</feature>
<feature type="helix" evidence="10">
    <location>
        <begin position="308"/>
        <end position="318"/>
    </location>
</feature>
<feature type="helix" evidence="10">
    <location>
        <begin position="324"/>
        <end position="329"/>
    </location>
</feature>
<feature type="strand" evidence="10">
    <location>
        <begin position="335"/>
        <end position="337"/>
    </location>
</feature>
<feature type="turn" evidence="10">
    <location>
        <begin position="339"/>
        <end position="342"/>
    </location>
</feature>
<feature type="strand" evidence="10">
    <location>
        <begin position="343"/>
        <end position="346"/>
    </location>
</feature>
<feature type="strand" evidence="10">
    <location>
        <begin position="349"/>
        <end position="357"/>
    </location>
</feature>
<feature type="helix" evidence="10">
    <location>
        <begin position="366"/>
        <end position="376"/>
    </location>
</feature>
<feature type="helix" evidence="10">
    <location>
        <begin position="380"/>
        <end position="382"/>
    </location>
</feature>
<feature type="strand" evidence="10">
    <location>
        <begin position="389"/>
        <end position="393"/>
    </location>
</feature>
<feature type="helix" evidence="10">
    <location>
        <begin position="397"/>
        <end position="399"/>
    </location>
</feature>
<feature type="strand" evidence="10">
    <location>
        <begin position="401"/>
        <end position="403"/>
    </location>
</feature>
<feature type="strand" evidence="10">
    <location>
        <begin position="406"/>
        <end position="408"/>
    </location>
</feature>
<feature type="strand" evidence="10">
    <location>
        <begin position="413"/>
        <end position="424"/>
    </location>
</feature>
<feature type="helix" evidence="10">
    <location>
        <begin position="439"/>
        <end position="441"/>
    </location>
</feature>
<feature type="strand" evidence="10">
    <location>
        <begin position="443"/>
        <end position="453"/>
    </location>
</feature>
<feature type="strand" evidence="10">
    <location>
        <begin position="459"/>
        <end position="462"/>
    </location>
</feature>
<feature type="strand" evidence="10">
    <location>
        <begin position="464"/>
        <end position="466"/>
    </location>
</feature>
<feature type="strand" evidence="10">
    <location>
        <begin position="473"/>
        <end position="475"/>
    </location>
</feature>
<feature type="helix" evidence="10">
    <location>
        <begin position="482"/>
        <end position="499"/>
    </location>
</feature>
<feature type="helix" evidence="10">
    <location>
        <begin position="502"/>
        <end position="504"/>
    </location>
</feature>
<feature type="turn" evidence="10">
    <location>
        <begin position="505"/>
        <end position="507"/>
    </location>
</feature>
<feature type="strand" evidence="10">
    <location>
        <begin position="508"/>
        <end position="513"/>
    </location>
</feature>
<feature type="turn" evidence="10">
    <location>
        <begin position="514"/>
        <end position="517"/>
    </location>
</feature>
<feature type="helix" evidence="10">
    <location>
        <begin position="521"/>
        <end position="531"/>
    </location>
</feature>
<feature type="strand" evidence="10">
    <location>
        <begin position="558"/>
        <end position="560"/>
    </location>
</feature>
<feature type="strand" evidence="10">
    <location>
        <begin position="564"/>
        <end position="568"/>
    </location>
</feature>
<feature type="helix" evidence="10">
    <location>
        <begin position="571"/>
        <end position="573"/>
    </location>
</feature>
<feature type="strand" evidence="10">
    <location>
        <begin position="574"/>
        <end position="576"/>
    </location>
</feature>
<feature type="helix" evidence="10">
    <location>
        <begin position="583"/>
        <end position="600"/>
    </location>
</feature>
<comment type="function">
    <text evidence="2 5 6">Catalyzes the single-oxidation or sequential double oxidation reaction of carbohydrates primarily at carbon-2 and/or carbon-3 with the concomitant reduction of the flavin. The enzyme exhibits a broad sugar substrate specificity, oxidizing different aldopyranoses to the corresponding C-1, C-2, C-3 or C-1,2, C-2,3 and C-3,4 (di)dehydro sugars with substrate-specific regioselectivity. Accepts only a narrow range of electron acceptors such as substituted benzoquinones and complexed metal ions and reacts extremely slowly with O(2) as acceptor. May play a role in the natural recycling of plant matter by oxidizing all major monosaccharides in lignocellulose and by reducing quinone compounds or reactive radical species generated during lignin depolymerization.</text>
</comment>
<comment type="catalytic activity">
    <reaction evidence="2 5 6">
        <text>pyranose + acceptor = pyranos-2-ulose + reduced acceptor.</text>
        <dbReference type="EC" id="1.1.99.29"/>
    </reaction>
</comment>
<comment type="catalytic activity">
    <reaction evidence="2 5 6">
        <text>pyranose + acceptor = pyranos-3-ulose + reduced acceptor.</text>
        <dbReference type="EC" id="1.1.99.29"/>
    </reaction>
</comment>
<comment type="catalytic activity">
    <reaction evidence="2 5 6">
        <text>pyranose + acceptor = pyranos-2,3-diulose + reduced acceptor.</text>
        <dbReference type="EC" id="1.1.99.29"/>
    </reaction>
</comment>
<comment type="catalytic activity">
    <reaction evidence="2 5 6">
        <text>a pyranoside + acceptor = a pyranosid-3-ulose + reduced acceptor.</text>
        <dbReference type="EC" id="1.1.99.29"/>
    </reaction>
</comment>
<comment type="catalytic activity">
    <reaction evidence="2 5 6">
        <text>a pyranoside + acceptor = a pyranosid-3,4-diulose + reduced acceptor.</text>
        <dbReference type="EC" id="1.1.99.29"/>
    </reaction>
</comment>
<comment type="cofactor">
    <cofactor evidence="2 4">
        <name>FAD</name>
        <dbReference type="ChEBI" id="CHEBI:57692"/>
    </cofactor>
    <text evidence="2 4">Binds 1 FAD covalently per subunit.</text>
</comment>
<comment type="biophysicochemical properties">
    <kinetics>
        <KM evidence="2">0.82 mM for D-glucose (with ferricenium ion (Fc(+)) as electron acceptor)</KM>
        <KM evidence="2">6.82 mM for cellobiose (with ferricenium ion (Fc(+)) as electron acceptor)</KM>
        <KM evidence="2">8.61 mM for D-maltose (with ferricenium ion (Fc(+)) as electron acceptor)</KM>
        <KM evidence="2">156 mM for maltotriose (with ferricenium ion (Fc(+)) as electron acceptor)</KM>
        <KM evidence="2">108 mM for D-mannose (with ferricenium ion (Fc(+)) as electron acceptor)</KM>
        <KM evidence="2">1.05 mM for D-galactose (with ferricenium ion (Fc(+)) as electron acceptor)</KM>
        <KM evidence="2">137 mM for L-sorbose (with ferricenium ion (Fc(+)) as electron acceptor)</KM>
        <KM evidence="2">59.7 mM for D-ribose (with ferricenium ion (Fc(+)) as electron acceptor)</KM>
        <KM evidence="2">79.1 mM for D-talose (with ferricenium ion (Fc(+)) as electron acceptor)</KM>
        <KM evidence="2">1.93 mM for D-xylose (with ferricenium ion (Fc(+)) as electron acceptor)</KM>
        <KM evidence="2">0.54 mM for L-arabinose (with ferricenium ion (Fc(+)) as electron acceptor)</KM>
        <KM evidence="2">10.8 mM for xylobiose (with ferricenium ion (Fc(+)) as electron acceptor)</KM>
        <KM evidence="2">153 mM for D-fructose (with ferricenium ion (Fc(+)) as electron acceptor)</KM>
        <KM evidence="2">134 mM for lactose (with ferricenium ion (Fc(+)) as electron acceptor)</KM>
        <KM evidence="2">0.13 mM for ferricenium (at pH 8.5 with D-glucose as substrate)</KM>
        <KM evidence="2">1.82 mM for 1,4-benzoquinone (at pH 3.0 with D-glucose as substrate)</KM>
        <KM evidence="2">0.55 mM for 2-chloro-1,4-benzoquinone (at pH 5.0 with D-glucose as substrate)</KM>
        <KM evidence="2">0.92 mM for 2,5-dichloro-1,4-benzoquinone (at pH 5.0 with D-glucose as substrate)</KM>
        <KM evidence="2">0.18 mM for methyl-1,4-benzoquinone (at pH 8.0 with D-glucose as substrate)</KM>
        <KM evidence="2">0.22 mM for 3,5-di-tert-butyl-benzoquinone (at pH 6.0 with D-glucose as substrate)</KM>
        <KM evidence="2">0.14 mM for 2,6-dichloroindophenol (at pH 4.0 with D-glucose as substrate)</KM>
        <Vmax evidence="2">41.4 umol/min/mg enzyme for D-glucose (with ferricenium ion (Fc(+)) as electron acceptor)</Vmax>
        <Vmax evidence="2">34.5 umol/min/mg enzyme for cellobiose (with ferricenium ion (Fc(+)) as electron acceptor)</Vmax>
        <Vmax evidence="2">38.9 umol/min/mg enzyme for D-maltose (with ferricenium ion (Fc(+)) as electron acceptor)</Vmax>
        <Vmax evidence="2">21.3 umol/min/mg enzyme for maltotriose (with ferricenium ion (Fc(+)) as electron acceptor)</Vmax>
        <Vmax evidence="2">26.4 umol/min/mg enzyme for D-mannose (with ferricenium ion (Fc(+)) as electron acceptor)</Vmax>
        <Vmax evidence="2">43.7 umol/min/mg enzyme for D-galactose (with ferricenium ion (Fc(+)) as electron acceptor)</Vmax>
        <Vmax evidence="2">14.1 umol/min/mg enzyme for L-sorbose (with ferricenium ion (Fc(+)) as electron acceptor)</Vmax>
        <Vmax evidence="2">28.2 umol/min/mg enzyme for D-ribose (with ferricenium ion (Fc(+)) as electron acceptor)</Vmax>
        <Vmax evidence="2">19.2 umol/min/mg enzyme for D-talose (with ferricenium ion (Fc(+)) as electron acceptor)</Vmax>
        <Vmax evidence="2">39.1 umol/min/mg enzyme for D-xylose (with ferricenium ion (Fc(+)) as electron acceptor)</Vmax>
        <Vmax evidence="2">33.5 umol/min/mg enzyme for L-arabinose (with ferricenium ion (Fc(+)) as electron acceptor)</Vmax>
        <Vmax evidence="2">45.4 umol/min/mg enzyme for xylobiose (with ferricenium ion (Fc(+)) as electron acceptor)</Vmax>
        <Vmax evidence="2">14.9 umol/min/mg enzyme for D-fructose (with ferricenium ion (Fc(+)) as electron acceptor)</Vmax>
        <Vmax evidence="2">35.6 umol/min/mg enzyme for lactose (with ferricenium ion (Fc(+)) as electron acceptor)</Vmax>
        <Vmax evidence="2">93.9 umol/min/mg enzyme for ferricenium (at pH 8.5 with D-glucose as substrate)</Vmax>
        <Vmax evidence="2">68.5 umol/min/mg enzyme for 1,4-benzoquinone (at pH 3.0 with D-glucose as substrate)</Vmax>
        <Vmax evidence="2">13.6 umol/min/mg enzyme for 2-chloro-1,4-benzoquinone (at pH 5.0 with D-glucose as substrate)</Vmax>
        <Vmax evidence="2">2.78 umol/min/mg enzyme for 2,5-dichloro-1,4-benzoquinone (at pH 5.0 with D-glucose as substrate)</Vmax>
        <Vmax evidence="2">2.7 umol/min/mg enzyme for methyl-1,4-benzoquinone (at pH 8.0 with D-glucose as substrate)</Vmax>
        <Vmax evidence="2">95.6 umol/min/mg enzyme for 3,5-di-tert-butyl-benzoquinone (at pH 6.0 with D-glucose as substrate)</Vmax>
        <Vmax evidence="2">56.3 umol/min/mg enzyme for 2,6-dichloroindophenol (at pH 4.0 with D-glucose as substrate)</Vmax>
    </kinetics>
    <phDependence>
        <text evidence="2">Optimum pH is 9 with ferricenium ion (Fc(+)) as electron acceptor. The enzyme is stable from pH 4 to pH 10.</text>
    </phDependence>
    <temperatureDependence>
        <text evidence="2">Optimum temperature is 63 degrees Celsius with ferricenium ion (Fc(+)) as electron acceptor.</text>
    </temperatureDependence>
</comment>
<comment type="subunit">
    <text evidence="2">Monomer.</text>
</comment>
<comment type="subcellular location">
    <subcellularLocation>
        <location evidence="2">Secreted</location>
    </subcellularLocation>
</comment>
<comment type="induction">
    <text evidence="3">Induced by carbon starvation.</text>
</comment>
<comment type="PTM">
    <text evidence="2">N-glycosylated.</text>
</comment>
<comment type="mass spectrometry">
    <text>Mass of the N-glycosylated protein.</text>
</comment>
<comment type="similarity">
    <text evidence="9">Belongs to the GMC oxidoreductase family.</text>
</comment>
<evidence type="ECO:0000255" key="1">
    <source>
        <dbReference type="PROSITE-ProRule" id="PRU00498"/>
    </source>
</evidence>
<evidence type="ECO:0000269" key="2">
    <source>
    </source>
</evidence>
<evidence type="ECO:0000269" key="3">
    <source>
    </source>
</evidence>
<evidence type="ECO:0000269" key="4">
    <source>
    </source>
</evidence>
<evidence type="ECO:0000269" key="5">
    <source ref="3"/>
</evidence>
<evidence type="ECO:0000269" key="6">
    <source ref="4"/>
</evidence>
<evidence type="ECO:0000303" key="7">
    <source>
    </source>
</evidence>
<evidence type="ECO:0000303" key="8">
    <source ref="4"/>
</evidence>
<evidence type="ECO:0000305" key="9"/>
<evidence type="ECO:0007829" key="10">
    <source>
        <dbReference type="PDB" id="4H7U"/>
    </source>
</evidence>
<proteinExistence type="evidence at protein level"/>
<keyword id="KW-0002">3D-structure</keyword>
<keyword id="KW-0119">Carbohydrate metabolism</keyword>
<keyword id="KW-0903">Direct protein sequencing</keyword>
<keyword id="KW-0274">FAD</keyword>
<keyword id="KW-0285">Flavoprotein</keyword>
<keyword id="KW-0325">Glycoprotein</keyword>
<keyword id="KW-0560">Oxidoreductase</keyword>
<keyword id="KW-0964">Secreted</keyword>
<keyword id="KW-0732">Signal</keyword>
<reference key="1">
    <citation type="journal article" date="2008" name="Curr. Genet.">
        <title>Molecular cloning of three pyranose dehydrogenase-encoding genes from Agaricus meleagris and analysis of their expression by real-time RT-PCR.</title>
        <authorList>
            <person name="Kittl R."/>
            <person name="Sygmund C."/>
            <person name="Halada P."/>
            <person name="Volc J."/>
            <person name="Divne C."/>
            <person name="Haltrich D."/>
            <person name="Peterbauer C.K."/>
        </authorList>
    </citation>
    <scope>NUCLEOTIDE SEQUENCE [GENOMIC DNA / MRNA]</scope>
    <scope>INDUCTION</scope>
    <source>
        <strain>CCBAS 907</strain>
    </source>
</reference>
<reference key="2">
    <citation type="journal article" date="2008" name="J. Biotechnol.">
        <title>Characterization of pyranose dehydrogenase from Agaricus meleagris and its application in the C-2 specific conversion of D-galactose.</title>
        <authorList>
            <person name="Sygmund C."/>
            <person name="Kittl R."/>
            <person name="Volc J."/>
            <person name="Halada P."/>
            <person name="Kubatova E."/>
            <person name="Haltrich D."/>
            <person name="Peterbauer C.K."/>
        </authorList>
    </citation>
    <scope>PROTEIN SEQUENCE OF 26-35</scope>
    <scope>FUNCTION</scope>
    <scope>CATALYTIC ACTIVITY</scope>
    <scope>BIOPHYSICOCHEMICAL PROPERTIES</scope>
    <scope>SUBCELLULAR LOCATION</scope>
    <scope>SUBUNIT</scope>
    <scope>GLYCOSYLATION</scope>
    <scope>MASS SPECTROMETRY</scope>
    <source>
        <strain>CCBAS 907</strain>
    </source>
</reference>
<reference key="3">
    <citation type="journal article" date="2004" name="Tetrahedron Lett.">
        <title>A new enzyme catalysis: 3,4-dioxidation of some aryl beta-D-glycopyranosides by fungal pyranose dehydrogenase.</title>
        <authorList>
            <person name="Sedmera P."/>
            <person name="Halada P."/>
            <person name="Peterbauer C."/>
            <person name="Volc J."/>
        </authorList>
    </citation>
    <scope>FUNCTION</scope>
    <scope>CATALYTIC ACTIVITY</scope>
    <scope>SUBSTRATE SPECIFICITY</scope>
    <source>
        <strain>CCBAS 907</strain>
    </source>
</reference>
<reference key="4">
    <citation type="journal article" date="2006" name="J. Mol. Catal., B Enzym.">
        <title>New biotransformations of some reducing sugars to the corresponding (di)dehydro(glycosyl) aldoses or aldonic acids using fungal pyranose dehydrogenase.</title>
        <authorList>
            <person name="Sedmera P."/>
            <person name="Halada P."/>
            <person name="Kubatova E."/>
            <person name="Haltrich D."/>
            <person name="Prikrylova V."/>
            <person name="Volc J."/>
        </authorList>
    </citation>
    <scope>FUNCTION</scope>
    <scope>CATALYTIC ACTIVITY</scope>
    <scope>SUBSTRATE SPECIFICITY</scope>
    <source>
        <strain>CCBAS 907</strain>
    </source>
</reference>
<reference key="5">
    <citation type="journal article" date="2013" name="PLoS ONE">
        <title>The 1.6 A crystal structure of pyranose dehydrogenase from Agaricus meleagris rationalizes substrate specificity and reveals a flavin intermediate.</title>
        <authorList>
            <person name="Tan T.C."/>
            <person name="Spadiut O."/>
            <person name="Wongnate T."/>
            <person name="Sucharitakul J."/>
            <person name="Krondorfer I."/>
            <person name="Sygmund C."/>
            <person name="Haltrich D."/>
            <person name="Chaiyen P."/>
            <person name="Peterbauer C.K."/>
            <person name="Divne C."/>
        </authorList>
    </citation>
    <scope>X-RAY CRYSTALLOGRAPHY (1.60 ANGSTROMS) IN COMPLEX WITH FAD</scope>
    <scope>GLYCOSYLATION AT ASN-100 AND ASN-344</scope>
    <scope>COFACTOR</scope>
    <scope>ACTIVE SITE</scope>
</reference>
<organism>
    <name type="scientific">Leucoagaricus meleagris</name>
    <name type="common">Western flat-topped agaric</name>
    <name type="synonym">Agaricus meleagris</name>
    <dbReference type="NCBI Taxonomy" id="201219"/>
    <lineage>
        <taxon>Eukaryota</taxon>
        <taxon>Fungi</taxon>
        <taxon>Dikarya</taxon>
        <taxon>Basidiomycota</taxon>
        <taxon>Agaricomycotina</taxon>
        <taxon>Agaricomycetes</taxon>
        <taxon>Agaricomycetidae</taxon>
        <taxon>Agaricales</taxon>
        <taxon>Agaricineae</taxon>
        <taxon>Agaricaceae</taxon>
        <taxon>Leucoagaricus</taxon>
    </lineage>
</organism>
<sequence>MLPRVTKLNSRLLSLALLGIQIARGAITYQHPDDLPSGVDYDFIVAGGGTAGLVVASRLSENSNWKVLVIEAGPSNKDAFVTRVPGLASTLGAGSPIDWNYTTIPQDGLDGRSLDYPRAKILGGCSTHNGMVYTRGSKDDWNSWAGIIGDQGLGWDSILPAIKKAEKFTQDFTDQSVKGHIDPSVHGFDGKLSVSAAYSNISFNDLLFETTKELNAEFPFKLDMNDGKPIGLGWTQYTIDNHAERSSSATSYLESTGDNVHVLVNTLVTRVLSASGNGTDFRKVEFAVDANSPKKQLEAKKEVIVAGGVIASPQILMNSGIGERKVLQAVGIDTLIDNPSVGKNLSDQGATSVMFDTTLPSTDFDVDAALTEWTNSHTGPLARGARLNHLTFVRLPDDKLNGQDPSSGKNSPHIEFQFAQITPQVPTLGVPKQAPLPAANSYRLLLQLAVVNLYSISRGSISLSDNNPFTYPLIDLNMFKEDIDIAILREGIRSAGRMFSSKAFKNSVNKFVYPPADATSDEDLDAFLRSSTFSYVHGVGTLSMSPKGASWGVVNPDFKVKGTSGLRVVDASVIPHAPAAHTQLPVYAFAEYASALIAKSYN</sequence>
<protein>
    <recommendedName>
        <fullName evidence="7">Pyranose dehydrogenase 1</fullName>
        <shortName evidence="7">PDH 1</shortName>
        <ecNumber evidence="2 5 6">1.1.99.29</ecNumber>
    </recommendedName>
    <alternativeName>
        <fullName evidence="8">Pyranose:quinone oxidoreductase 1</fullName>
    </alternativeName>
</protein>
<dbReference type="EC" id="1.1.99.29" evidence="2 5 6"/>
<dbReference type="EMBL" id="AY753306">
    <property type="protein sequence ID" value="AAW82996.1"/>
    <property type="molecule type" value="Genomic_DNA"/>
</dbReference>
<dbReference type="EMBL" id="AY753307">
    <property type="protein sequence ID" value="AAW82997.1"/>
    <property type="molecule type" value="mRNA"/>
</dbReference>
<dbReference type="PDB" id="4H7U">
    <property type="method" value="X-ray"/>
    <property type="resolution" value="1.60 A"/>
    <property type="chains" value="A=1-602"/>
</dbReference>
<dbReference type="PDBsum" id="4H7U"/>
<dbReference type="SMR" id="Q3L245"/>
<dbReference type="CAZy" id="AA3">
    <property type="family name" value="Auxiliary Activities 3"/>
</dbReference>
<dbReference type="GlyCosmos" id="Q3L245">
    <property type="glycosylation" value="4 sites, No reported glycans"/>
</dbReference>
<dbReference type="iPTMnet" id="Q3L245"/>
<dbReference type="BRENDA" id="1.1.99.29">
    <property type="organism ID" value="7355"/>
</dbReference>
<dbReference type="EvolutionaryTrace" id="Q3L245"/>
<dbReference type="GO" id="GO:0005576">
    <property type="term" value="C:extracellular region"/>
    <property type="evidence" value="ECO:0007669"/>
    <property type="project" value="UniProtKB-SubCell"/>
</dbReference>
<dbReference type="GO" id="GO:0050660">
    <property type="term" value="F:flavin adenine dinucleotide binding"/>
    <property type="evidence" value="ECO:0007669"/>
    <property type="project" value="InterPro"/>
</dbReference>
<dbReference type="GO" id="GO:0033718">
    <property type="term" value="F:pyranose dehydrogenase (acceptor) activity"/>
    <property type="evidence" value="ECO:0007669"/>
    <property type="project" value="UniProtKB-EC"/>
</dbReference>
<dbReference type="Gene3D" id="3.50.50.60">
    <property type="entry name" value="FAD/NAD(P)-binding domain"/>
    <property type="match status" value="1"/>
</dbReference>
<dbReference type="Gene3D" id="3.30.560.10">
    <property type="entry name" value="Glucose Oxidase, domain 3"/>
    <property type="match status" value="1"/>
</dbReference>
<dbReference type="InterPro" id="IPR036188">
    <property type="entry name" value="FAD/NAD-bd_sf"/>
</dbReference>
<dbReference type="InterPro" id="IPR012132">
    <property type="entry name" value="GMC_OxRdtase"/>
</dbReference>
<dbReference type="InterPro" id="IPR000172">
    <property type="entry name" value="GMC_OxRdtase_N"/>
</dbReference>
<dbReference type="InterPro" id="IPR007867">
    <property type="entry name" value="GMC_OxRtase_C"/>
</dbReference>
<dbReference type="PANTHER" id="PTHR11552">
    <property type="entry name" value="GLUCOSE-METHANOL-CHOLINE GMC OXIDOREDUCTASE"/>
    <property type="match status" value="1"/>
</dbReference>
<dbReference type="PANTHER" id="PTHR11552:SF201">
    <property type="entry name" value="GLUCOSE-METHANOL-CHOLINE OXIDOREDUCTASE N-TERMINAL DOMAIN-CONTAINING PROTEIN"/>
    <property type="match status" value="1"/>
</dbReference>
<dbReference type="Pfam" id="PF05199">
    <property type="entry name" value="GMC_oxred_C"/>
    <property type="match status" value="1"/>
</dbReference>
<dbReference type="Pfam" id="PF00732">
    <property type="entry name" value="GMC_oxred_N"/>
    <property type="match status" value="1"/>
</dbReference>
<dbReference type="PIRSF" id="PIRSF000137">
    <property type="entry name" value="Alcohol_oxidase"/>
    <property type="match status" value="1"/>
</dbReference>
<dbReference type="SUPFAM" id="SSF54373">
    <property type="entry name" value="FAD-linked reductases, C-terminal domain"/>
    <property type="match status" value="1"/>
</dbReference>
<dbReference type="SUPFAM" id="SSF51905">
    <property type="entry name" value="FAD/NAD(P)-binding domain"/>
    <property type="match status" value="1"/>
</dbReference>
<name>PDH1_LEUMG</name>